<accession>P56413</accession>
<proteinExistence type="evidence at transcript level"/>
<evidence type="ECO:0000250" key="1"/>
<evidence type="ECO:0000250" key="2">
    <source>
        <dbReference type="UniProtKB" id="O00253"/>
    </source>
</evidence>
<evidence type="ECO:0000255" key="3"/>
<evidence type="ECO:0000255" key="4">
    <source>
        <dbReference type="PROSITE-ProRule" id="PRU00494"/>
    </source>
</evidence>
<reference key="1">
    <citation type="submission" date="1997-10" db="EMBL/GenBank/DDBJ databases">
        <authorList>
            <person name="Oulmouden A."/>
            <person name="Petit J.-M."/>
            <person name="Julien R."/>
        </authorList>
    </citation>
    <scope>NUCLEOTIDE SEQUENCE [MRNA]</scope>
</reference>
<name>AGRP_BOVIN</name>
<keyword id="KW-1015">Disulfide bond</keyword>
<keyword id="KW-0333">Golgi apparatus</keyword>
<keyword id="KW-0960">Knottin</keyword>
<keyword id="KW-1185">Reference proteome</keyword>
<keyword id="KW-0964">Secreted</keyword>
<keyword id="KW-0732">Signal</keyword>
<gene>
    <name type="primary">AGRP</name>
    <name type="synonym">AGRT</name>
    <name type="synonym">ART</name>
</gene>
<sequence length="134" mass="14706">MLTAVLLSCALLLAMPPLQGAQMGPAPLEGIGRPEEALFLELQGLSLQPSLKRITEEQAEESLLQEAEAKALAEVLDPEGRKPRSPRRCVRLHESCLGHQVPCCDPCATCYCRFFNAFCYCRKLGTTTNPCSRT</sequence>
<dbReference type="EMBL" id="AJ002025">
    <property type="protein sequence ID" value="CAA05148.1"/>
    <property type="molecule type" value="mRNA"/>
</dbReference>
<dbReference type="RefSeq" id="NP_776408.1">
    <property type="nucleotide sequence ID" value="NM_173983.1"/>
</dbReference>
<dbReference type="SMR" id="P56413"/>
<dbReference type="FunCoup" id="P56413">
    <property type="interactions" value="168"/>
</dbReference>
<dbReference type="STRING" id="9913.ENSBTAP00000019347"/>
<dbReference type="PaxDb" id="9913-ENSBTAP00000019347"/>
<dbReference type="GeneID" id="280987"/>
<dbReference type="KEGG" id="bta:280987"/>
<dbReference type="CTD" id="181"/>
<dbReference type="eggNOG" id="ENOG502S7K0">
    <property type="taxonomic scope" value="Eukaryota"/>
</dbReference>
<dbReference type="InParanoid" id="P56413"/>
<dbReference type="OrthoDB" id="9942042at2759"/>
<dbReference type="Proteomes" id="UP000009136">
    <property type="component" value="Unplaced"/>
</dbReference>
<dbReference type="GO" id="GO:0005615">
    <property type="term" value="C:extracellular space"/>
    <property type="evidence" value="ECO:0000250"/>
    <property type="project" value="UniProtKB"/>
</dbReference>
<dbReference type="GO" id="GO:0005796">
    <property type="term" value="C:Golgi lumen"/>
    <property type="evidence" value="ECO:0000250"/>
    <property type="project" value="UniProtKB"/>
</dbReference>
<dbReference type="GO" id="GO:0005184">
    <property type="term" value="F:neuropeptide hormone activity"/>
    <property type="evidence" value="ECO:0000250"/>
    <property type="project" value="UniProtKB"/>
</dbReference>
<dbReference type="GO" id="GO:0070996">
    <property type="term" value="F:type 1 melanocortin receptor binding"/>
    <property type="evidence" value="ECO:0000318"/>
    <property type="project" value="GO_Central"/>
</dbReference>
<dbReference type="GO" id="GO:0031781">
    <property type="term" value="F:type 3 melanocortin receptor binding"/>
    <property type="evidence" value="ECO:0000250"/>
    <property type="project" value="UniProtKB"/>
</dbReference>
<dbReference type="GO" id="GO:0031782">
    <property type="term" value="F:type 4 melanocortin receptor binding"/>
    <property type="evidence" value="ECO:0000250"/>
    <property type="project" value="UniProtKB"/>
</dbReference>
<dbReference type="GO" id="GO:0008343">
    <property type="term" value="P:adult feeding behavior"/>
    <property type="evidence" value="ECO:0000318"/>
    <property type="project" value="GO_Central"/>
</dbReference>
<dbReference type="GO" id="GO:0009755">
    <property type="term" value="P:hormone-mediated signaling pathway"/>
    <property type="evidence" value="ECO:0007669"/>
    <property type="project" value="InterPro"/>
</dbReference>
<dbReference type="GO" id="GO:0007218">
    <property type="term" value="P:neuropeptide signaling pathway"/>
    <property type="evidence" value="ECO:0000250"/>
    <property type="project" value="UniProtKB"/>
</dbReference>
<dbReference type="GO" id="GO:2000253">
    <property type="term" value="P:positive regulation of feeding behavior"/>
    <property type="evidence" value="ECO:0000318"/>
    <property type="project" value="GO_Central"/>
</dbReference>
<dbReference type="GO" id="GO:0060259">
    <property type="term" value="P:regulation of feeding behavior"/>
    <property type="evidence" value="ECO:0000250"/>
    <property type="project" value="UniProtKB"/>
</dbReference>
<dbReference type="FunFam" id="4.10.760.10:FF:000003">
    <property type="entry name" value="Agouti-related peptide 2"/>
    <property type="match status" value="1"/>
</dbReference>
<dbReference type="Gene3D" id="4.10.760.10">
    <property type="entry name" value="Agouti domain"/>
    <property type="match status" value="1"/>
</dbReference>
<dbReference type="InterPro" id="IPR007733">
    <property type="entry name" value="Agouti"/>
</dbReference>
<dbReference type="InterPro" id="IPR027300">
    <property type="entry name" value="Agouti_dom"/>
</dbReference>
<dbReference type="InterPro" id="IPR036836">
    <property type="entry name" value="Agouti_dom_sf"/>
</dbReference>
<dbReference type="PANTHER" id="PTHR16551">
    <property type="entry name" value="AGOUTI RELATED"/>
    <property type="match status" value="1"/>
</dbReference>
<dbReference type="PANTHER" id="PTHR16551:SF4">
    <property type="entry name" value="AGOUTI-RELATED PROTEIN"/>
    <property type="match status" value="1"/>
</dbReference>
<dbReference type="Pfam" id="PF05039">
    <property type="entry name" value="Agouti"/>
    <property type="match status" value="1"/>
</dbReference>
<dbReference type="SMART" id="SM00792">
    <property type="entry name" value="Agouti"/>
    <property type="match status" value="1"/>
</dbReference>
<dbReference type="SUPFAM" id="SSF57055">
    <property type="entry name" value="Agouti-related protein"/>
    <property type="match status" value="1"/>
</dbReference>
<dbReference type="PROSITE" id="PS60024">
    <property type="entry name" value="AGOUTI_1"/>
    <property type="match status" value="1"/>
</dbReference>
<dbReference type="PROSITE" id="PS51150">
    <property type="entry name" value="AGOUTI_2"/>
    <property type="match status" value="1"/>
</dbReference>
<feature type="signal peptide" evidence="3">
    <location>
        <begin position="1"/>
        <end position="20"/>
    </location>
</feature>
<feature type="propeptide" id="PRO_0000434043" evidence="2">
    <location>
        <begin position="21"/>
        <end position="84"/>
    </location>
</feature>
<feature type="chain" id="PRO_0000001033" description="Agouti-related protein">
    <location>
        <begin position="85"/>
        <end position="134"/>
    </location>
</feature>
<feature type="domain" description="Agouti" evidence="4">
    <location>
        <begin position="89"/>
        <end position="131"/>
    </location>
</feature>
<feature type="region of interest" description="Interaction with melanocortin receptors" evidence="1">
    <location>
        <begin position="113"/>
        <end position="115"/>
    </location>
</feature>
<feature type="site" description="Cleavage; by PCSK1" evidence="2">
    <location>
        <begin position="84"/>
        <end position="85"/>
    </location>
</feature>
<feature type="disulfide bond" evidence="2 4">
    <location>
        <begin position="89"/>
        <end position="104"/>
    </location>
</feature>
<feature type="disulfide bond" evidence="2 4">
    <location>
        <begin position="96"/>
        <end position="110"/>
    </location>
</feature>
<feature type="disulfide bond" evidence="2 4">
    <location>
        <begin position="103"/>
        <end position="121"/>
    </location>
</feature>
<feature type="disulfide bond" evidence="2 4">
    <location>
        <begin position="107"/>
        <end position="131"/>
    </location>
</feature>
<feature type="disulfide bond" evidence="2 4">
    <location>
        <begin position="112"/>
        <end position="119"/>
    </location>
</feature>
<comment type="function">
    <text evidence="1">Plays a role in weight homeostasis. Involved in the control of feeding behavior through the central melanocortin system. Acts as alpha melanocyte-stimulating hormone antagonist by inhibiting cAMP production mediated by stimulation of melanocortin receptors within the hypothalamus and adrenal gland. Has very low activity with MC5R. Is an inverse agonist for MC3R and MC4R being able to suppress their constitutive activity. It promotes MC3R and MC4R endocytosis in an arrestin-dependent manner.</text>
</comment>
<comment type="subunit">
    <text evidence="2">Interacts with melanocortin receptors MC3R, MC4R and MC5R.</text>
</comment>
<comment type="subcellular location">
    <subcellularLocation>
        <location evidence="2">Secreted</location>
    </subcellularLocation>
    <subcellularLocation>
        <location evidence="2">Golgi apparatus lumen</location>
    </subcellularLocation>
</comment>
<comment type="domain">
    <text evidence="2">The presence of a 'disulfide through disulfide knot' structurally defines this protein as a knottin.</text>
</comment>
<protein>
    <recommendedName>
        <fullName>Agouti-related protein</fullName>
    </recommendedName>
</protein>
<organism>
    <name type="scientific">Bos taurus</name>
    <name type="common">Bovine</name>
    <dbReference type="NCBI Taxonomy" id="9913"/>
    <lineage>
        <taxon>Eukaryota</taxon>
        <taxon>Metazoa</taxon>
        <taxon>Chordata</taxon>
        <taxon>Craniata</taxon>
        <taxon>Vertebrata</taxon>
        <taxon>Euteleostomi</taxon>
        <taxon>Mammalia</taxon>
        <taxon>Eutheria</taxon>
        <taxon>Laurasiatheria</taxon>
        <taxon>Artiodactyla</taxon>
        <taxon>Ruminantia</taxon>
        <taxon>Pecora</taxon>
        <taxon>Bovidae</taxon>
        <taxon>Bovinae</taxon>
        <taxon>Bos</taxon>
    </lineage>
</organism>